<accession>C4XIQ1</accession>
<organism>
    <name type="scientific">Solidesulfovibrio magneticus (strain ATCC 700980 / DSM 13731 / RS-1)</name>
    <name type="common">Desulfovibrio magneticus</name>
    <dbReference type="NCBI Taxonomy" id="573370"/>
    <lineage>
        <taxon>Bacteria</taxon>
        <taxon>Pseudomonadati</taxon>
        <taxon>Thermodesulfobacteriota</taxon>
        <taxon>Desulfovibrionia</taxon>
        <taxon>Desulfovibrionales</taxon>
        <taxon>Desulfovibrionaceae</taxon>
        <taxon>Solidesulfovibrio</taxon>
    </lineage>
</organism>
<proteinExistence type="inferred from homology"/>
<evidence type="ECO:0000255" key="1">
    <source>
        <dbReference type="HAMAP-Rule" id="MF_00093"/>
    </source>
</evidence>
<evidence type="ECO:0000256" key="2">
    <source>
        <dbReference type="SAM" id="MobiDB-lite"/>
    </source>
</evidence>
<dbReference type="EMBL" id="AP010904">
    <property type="protein sequence ID" value="BAH76619.1"/>
    <property type="molecule type" value="Genomic_DNA"/>
</dbReference>
<dbReference type="RefSeq" id="WP_015861773.1">
    <property type="nucleotide sequence ID" value="NC_012796.1"/>
</dbReference>
<dbReference type="SMR" id="C4XIQ1"/>
<dbReference type="STRING" id="573370.DMR_31280"/>
<dbReference type="KEGG" id="dma:DMR_31280"/>
<dbReference type="eggNOG" id="COG0216">
    <property type="taxonomic scope" value="Bacteria"/>
</dbReference>
<dbReference type="HOGENOM" id="CLU_036856_0_1_7"/>
<dbReference type="OrthoDB" id="9806673at2"/>
<dbReference type="Proteomes" id="UP000009071">
    <property type="component" value="Chromosome"/>
</dbReference>
<dbReference type="GO" id="GO:0005737">
    <property type="term" value="C:cytoplasm"/>
    <property type="evidence" value="ECO:0007669"/>
    <property type="project" value="UniProtKB-SubCell"/>
</dbReference>
<dbReference type="GO" id="GO:0016149">
    <property type="term" value="F:translation release factor activity, codon specific"/>
    <property type="evidence" value="ECO:0007669"/>
    <property type="project" value="UniProtKB-UniRule"/>
</dbReference>
<dbReference type="FunFam" id="3.30.160.20:FF:000004">
    <property type="entry name" value="Peptide chain release factor 1"/>
    <property type="match status" value="1"/>
</dbReference>
<dbReference type="FunFam" id="3.30.70.1660:FF:000002">
    <property type="entry name" value="Peptide chain release factor 1"/>
    <property type="match status" value="1"/>
</dbReference>
<dbReference type="FunFam" id="3.30.70.1660:FF:000004">
    <property type="entry name" value="Peptide chain release factor 1"/>
    <property type="match status" value="1"/>
</dbReference>
<dbReference type="Gene3D" id="3.30.160.20">
    <property type="match status" value="1"/>
</dbReference>
<dbReference type="Gene3D" id="3.30.70.1660">
    <property type="match status" value="1"/>
</dbReference>
<dbReference type="Gene3D" id="6.10.140.1950">
    <property type="match status" value="1"/>
</dbReference>
<dbReference type="HAMAP" id="MF_00093">
    <property type="entry name" value="Rel_fac_1"/>
    <property type="match status" value="1"/>
</dbReference>
<dbReference type="InterPro" id="IPR005139">
    <property type="entry name" value="PCRF"/>
</dbReference>
<dbReference type="InterPro" id="IPR000352">
    <property type="entry name" value="Pep_chain_release_fac_I"/>
</dbReference>
<dbReference type="InterPro" id="IPR045853">
    <property type="entry name" value="Pep_chain_release_fac_I_sf"/>
</dbReference>
<dbReference type="InterPro" id="IPR050057">
    <property type="entry name" value="Prokaryotic/Mito_RF"/>
</dbReference>
<dbReference type="InterPro" id="IPR004373">
    <property type="entry name" value="RF-1"/>
</dbReference>
<dbReference type="NCBIfam" id="TIGR00019">
    <property type="entry name" value="prfA"/>
    <property type="match status" value="1"/>
</dbReference>
<dbReference type="NCBIfam" id="NF001859">
    <property type="entry name" value="PRK00591.1"/>
    <property type="match status" value="1"/>
</dbReference>
<dbReference type="PANTHER" id="PTHR43804">
    <property type="entry name" value="LD18447P"/>
    <property type="match status" value="1"/>
</dbReference>
<dbReference type="PANTHER" id="PTHR43804:SF7">
    <property type="entry name" value="LD18447P"/>
    <property type="match status" value="1"/>
</dbReference>
<dbReference type="Pfam" id="PF03462">
    <property type="entry name" value="PCRF"/>
    <property type="match status" value="1"/>
</dbReference>
<dbReference type="Pfam" id="PF00472">
    <property type="entry name" value="RF-1"/>
    <property type="match status" value="1"/>
</dbReference>
<dbReference type="SMART" id="SM00937">
    <property type="entry name" value="PCRF"/>
    <property type="match status" value="1"/>
</dbReference>
<dbReference type="SUPFAM" id="SSF75620">
    <property type="entry name" value="Release factor"/>
    <property type="match status" value="1"/>
</dbReference>
<dbReference type="PROSITE" id="PS00745">
    <property type="entry name" value="RF_PROK_I"/>
    <property type="match status" value="1"/>
</dbReference>
<protein>
    <recommendedName>
        <fullName evidence="1">Peptide chain release factor 1</fullName>
        <shortName evidence="1">RF-1</shortName>
    </recommendedName>
</protein>
<name>RF1_SOLM1</name>
<reference key="1">
    <citation type="journal article" date="2009" name="Genome Res.">
        <title>Whole genome sequence of Desulfovibrio magneticus strain RS-1 revealed common gene clusters in magnetotactic bacteria.</title>
        <authorList>
            <person name="Nakazawa H."/>
            <person name="Arakaki A."/>
            <person name="Narita-Yamada S."/>
            <person name="Yashiro I."/>
            <person name="Jinno K."/>
            <person name="Aoki N."/>
            <person name="Tsuruyama A."/>
            <person name="Okamura Y."/>
            <person name="Tanikawa S."/>
            <person name="Fujita N."/>
            <person name="Takeyama H."/>
            <person name="Matsunaga T."/>
        </authorList>
    </citation>
    <scope>NUCLEOTIDE SEQUENCE [LARGE SCALE GENOMIC DNA]</scope>
    <source>
        <strain>ATCC 700980 / DSM 13731 / RS-1</strain>
    </source>
</reference>
<feature type="chain" id="PRO_1000202690" description="Peptide chain release factor 1">
    <location>
        <begin position="1"/>
        <end position="357"/>
    </location>
</feature>
<feature type="region of interest" description="Disordered" evidence="2">
    <location>
        <begin position="282"/>
        <end position="302"/>
    </location>
</feature>
<feature type="compositionally biased region" description="Basic and acidic residues" evidence="2">
    <location>
        <begin position="282"/>
        <end position="291"/>
    </location>
</feature>
<feature type="modified residue" description="N5-methylglutamine" evidence="1">
    <location>
        <position position="232"/>
    </location>
</feature>
<sequence>MFAKLESLERKYEDLERQLSAPDVVSDQERFRKLSKTHSDLSDVVAAFREYKKIAQDLEDNQEMAQDPDPEIRELAQAETKALKEAQVELEARLKVLLLPKDPMDEKNILLEIRAGTGGDEAALFAGDLFRMYTRYAETKRWKVEIMSQSETGSGGFKEVIASISGDKVYSRLKYESGAHRVQRVPATESQGRIHTSAVTVAIMPEAEEVDVAIDPNELRIDVYRSSGPGGQSVNTTDSAVRVTHIPSGLVVICQDEKSQHKNKAKALKVLRSRLLQVEQDKQRAEQEAARRSQVGTGDRSERIRTYNFPQGRVTDHRINLTLYRLDAVLEGDLDELCGALIGHYQAEALKAQADAA</sequence>
<gene>
    <name evidence="1" type="primary">prfA</name>
    <name type="ordered locus">DMR_31280</name>
</gene>
<comment type="function">
    <text evidence="1">Peptide chain release factor 1 directs the termination of translation in response to the peptide chain termination codons UAG and UAA.</text>
</comment>
<comment type="subcellular location">
    <subcellularLocation>
        <location evidence="1">Cytoplasm</location>
    </subcellularLocation>
</comment>
<comment type="PTM">
    <text evidence="1">Methylated by PrmC. Methylation increases the termination efficiency of RF1.</text>
</comment>
<comment type="similarity">
    <text evidence="1">Belongs to the prokaryotic/mitochondrial release factor family.</text>
</comment>
<keyword id="KW-0963">Cytoplasm</keyword>
<keyword id="KW-0488">Methylation</keyword>
<keyword id="KW-0648">Protein biosynthesis</keyword>